<dbReference type="EMBL" id="AE000782">
    <property type="protein sequence ID" value="AAB89614.1"/>
    <property type="molecule type" value="Genomic_DNA"/>
</dbReference>
<dbReference type="PIR" id="G69456">
    <property type="entry name" value="G69456"/>
</dbReference>
<dbReference type="RefSeq" id="WP_010879152.1">
    <property type="nucleotide sequence ID" value="NC_000917.1"/>
</dbReference>
<dbReference type="STRING" id="224325.AF_1656"/>
<dbReference type="PaxDb" id="224325-AF_1656"/>
<dbReference type="EnsemblBacteria" id="AAB89614">
    <property type="protein sequence ID" value="AAB89614"/>
    <property type="gene ID" value="AF_1656"/>
</dbReference>
<dbReference type="GeneID" id="1484879"/>
<dbReference type="KEGG" id="afu:AF_1656"/>
<dbReference type="HOGENOM" id="CLU_1792014_0_0_2"/>
<dbReference type="Proteomes" id="UP000002199">
    <property type="component" value="Chromosome"/>
</dbReference>
<gene>
    <name type="ordered locus">AF_1656</name>
</gene>
<keyword id="KW-1185">Reference proteome</keyword>
<keyword id="KW-0732">Signal</keyword>
<feature type="signal peptide" evidence="1">
    <location>
        <begin position="1"/>
        <end position="23"/>
    </location>
</feature>
<feature type="chain" id="PRO_0000013668" description="Uncharacterized protein AF_1656">
    <location>
        <begin position="24"/>
        <end position="144"/>
    </location>
</feature>
<name>Y1656_ARCFU</name>
<sequence length="144" mass="16512">MRKILLFATVIGFLIMVSGTLSYFYDVESQRSTFKSGHWASEIYPTVSFVKKESPVKIDFYGKPNEEYSYDVIFRIVDAPGIPKLSWDGDDFVQFSLRKNVNDWEVGMHLSPQTNGTYVGELTISYPSYPYKVVEIPVTITLEE</sequence>
<protein>
    <recommendedName>
        <fullName>Uncharacterized protein AF_1656</fullName>
    </recommendedName>
</protein>
<accession>O28617</accession>
<proteinExistence type="inferred from homology"/>
<reference key="1">
    <citation type="journal article" date="1997" name="Nature">
        <title>The complete genome sequence of the hyperthermophilic, sulphate-reducing archaeon Archaeoglobus fulgidus.</title>
        <authorList>
            <person name="Klenk H.-P."/>
            <person name="Clayton R.A."/>
            <person name="Tomb J.-F."/>
            <person name="White O."/>
            <person name="Nelson K.E."/>
            <person name="Ketchum K.A."/>
            <person name="Dodson R.J."/>
            <person name="Gwinn M.L."/>
            <person name="Hickey E.K."/>
            <person name="Peterson J.D."/>
            <person name="Richardson D.L."/>
            <person name="Kerlavage A.R."/>
            <person name="Graham D.E."/>
            <person name="Kyrpides N.C."/>
            <person name="Fleischmann R.D."/>
            <person name="Quackenbush J."/>
            <person name="Lee N.H."/>
            <person name="Sutton G.G."/>
            <person name="Gill S.R."/>
            <person name="Kirkness E.F."/>
            <person name="Dougherty B.A."/>
            <person name="McKenney K."/>
            <person name="Adams M.D."/>
            <person name="Loftus B.J."/>
            <person name="Peterson S.N."/>
            <person name="Reich C.I."/>
            <person name="McNeil L.K."/>
            <person name="Badger J.H."/>
            <person name="Glodek A."/>
            <person name="Zhou L."/>
            <person name="Overbeek R."/>
            <person name="Gocayne J.D."/>
            <person name="Weidman J.F."/>
            <person name="McDonald L.A."/>
            <person name="Utterback T.R."/>
            <person name="Cotton M.D."/>
            <person name="Spriggs T."/>
            <person name="Artiach P."/>
            <person name="Kaine B.P."/>
            <person name="Sykes S.M."/>
            <person name="Sadow P.W."/>
            <person name="D'Andrea K.P."/>
            <person name="Bowman C."/>
            <person name="Fujii C."/>
            <person name="Garland S.A."/>
            <person name="Mason T.M."/>
            <person name="Olsen G.J."/>
            <person name="Fraser C.M."/>
            <person name="Smith H.O."/>
            <person name="Woese C.R."/>
            <person name="Venter J.C."/>
        </authorList>
    </citation>
    <scope>NUCLEOTIDE SEQUENCE [LARGE SCALE GENOMIC DNA]</scope>
    <source>
        <strain>ATCC 49558 / DSM 4304 / JCM 9628 / NBRC 100126 / VC-16</strain>
    </source>
</reference>
<evidence type="ECO:0000255" key="1"/>
<organism>
    <name type="scientific">Archaeoglobus fulgidus (strain ATCC 49558 / DSM 4304 / JCM 9628 / NBRC 100126 / VC-16)</name>
    <dbReference type="NCBI Taxonomy" id="224325"/>
    <lineage>
        <taxon>Archaea</taxon>
        <taxon>Methanobacteriati</taxon>
        <taxon>Methanobacteriota</taxon>
        <taxon>Archaeoglobi</taxon>
        <taxon>Archaeoglobales</taxon>
        <taxon>Archaeoglobaceae</taxon>
        <taxon>Archaeoglobus</taxon>
    </lineage>
</organism>